<comment type="similarity">
    <text evidence="1">Belongs to the universal ribosomal protein uS2 family.</text>
</comment>
<proteinExistence type="inferred from homology"/>
<organism>
    <name type="scientific">Treponema pallidum subsp. pallidum (strain SS14)</name>
    <dbReference type="NCBI Taxonomy" id="455434"/>
    <lineage>
        <taxon>Bacteria</taxon>
        <taxon>Pseudomonadati</taxon>
        <taxon>Spirochaetota</taxon>
        <taxon>Spirochaetia</taxon>
        <taxon>Spirochaetales</taxon>
        <taxon>Treponemataceae</taxon>
        <taxon>Treponema</taxon>
    </lineage>
</organism>
<protein>
    <recommendedName>
        <fullName evidence="1">Small ribosomal subunit protein uS2</fullName>
    </recommendedName>
    <alternativeName>
        <fullName evidence="3">30S ribosomal protein S2</fullName>
    </alternativeName>
</protein>
<feature type="chain" id="PRO_1000115070" description="Small ribosomal subunit protein uS2">
    <location>
        <begin position="1"/>
        <end position="291"/>
    </location>
</feature>
<feature type="region of interest" description="Disordered" evidence="2">
    <location>
        <begin position="238"/>
        <end position="291"/>
    </location>
</feature>
<feature type="compositionally biased region" description="Acidic residues" evidence="2">
    <location>
        <begin position="238"/>
        <end position="247"/>
    </location>
</feature>
<feature type="compositionally biased region" description="Basic and acidic residues" evidence="2">
    <location>
        <begin position="249"/>
        <end position="259"/>
    </location>
</feature>
<feature type="compositionally biased region" description="Acidic residues" evidence="2">
    <location>
        <begin position="274"/>
        <end position="291"/>
    </location>
</feature>
<keyword id="KW-0687">Ribonucleoprotein</keyword>
<keyword id="KW-0689">Ribosomal protein</keyword>
<name>RS2_TREPS</name>
<evidence type="ECO:0000255" key="1">
    <source>
        <dbReference type="HAMAP-Rule" id="MF_00291"/>
    </source>
</evidence>
<evidence type="ECO:0000256" key="2">
    <source>
        <dbReference type="SAM" id="MobiDB-lite"/>
    </source>
</evidence>
<evidence type="ECO:0000305" key="3"/>
<dbReference type="EMBL" id="CP000805">
    <property type="protein sequence ID" value="ACD71025.1"/>
    <property type="molecule type" value="Genomic_DNA"/>
</dbReference>
<dbReference type="RefSeq" id="WP_010882052.1">
    <property type="nucleotide sequence ID" value="NC_021508.1"/>
</dbReference>
<dbReference type="SMR" id="B2S3J6"/>
<dbReference type="GeneID" id="93876373"/>
<dbReference type="KEGG" id="tpp:TPASS_0606"/>
<dbReference type="PATRIC" id="fig|455434.6.peg.601"/>
<dbReference type="Proteomes" id="UP000001202">
    <property type="component" value="Chromosome"/>
</dbReference>
<dbReference type="GO" id="GO:0022627">
    <property type="term" value="C:cytosolic small ribosomal subunit"/>
    <property type="evidence" value="ECO:0007669"/>
    <property type="project" value="TreeGrafter"/>
</dbReference>
<dbReference type="GO" id="GO:0003735">
    <property type="term" value="F:structural constituent of ribosome"/>
    <property type="evidence" value="ECO:0007669"/>
    <property type="project" value="InterPro"/>
</dbReference>
<dbReference type="GO" id="GO:0006412">
    <property type="term" value="P:translation"/>
    <property type="evidence" value="ECO:0007669"/>
    <property type="project" value="UniProtKB-UniRule"/>
</dbReference>
<dbReference type="CDD" id="cd01425">
    <property type="entry name" value="RPS2"/>
    <property type="match status" value="1"/>
</dbReference>
<dbReference type="FunFam" id="1.10.287.610:FF:000001">
    <property type="entry name" value="30S ribosomal protein S2"/>
    <property type="match status" value="1"/>
</dbReference>
<dbReference type="Gene3D" id="3.40.50.10490">
    <property type="entry name" value="Glucose-6-phosphate isomerase like protein, domain 1"/>
    <property type="match status" value="1"/>
</dbReference>
<dbReference type="Gene3D" id="1.10.287.610">
    <property type="entry name" value="Helix hairpin bin"/>
    <property type="match status" value="1"/>
</dbReference>
<dbReference type="HAMAP" id="MF_00291_B">
    <property type="entry name" value="Ribosomal_uS2_B"/>
    <property type="match status" value="1"/>
</dbReference>
<dbReference type="InterPro" id="IPR001865">
    <property type="entry name" value="Ribosomal_uS2"/>
</dbReference>
<dbReference type="InterPro" id="IPR005706">
    <property type="entry name" value="Ribosomal_uS2_bac/mit/plastid"/>
</dbReference>
<dbReference type="InterPro" id="IPR018130">
    <property type="entry name" value="Ribosomal_uS2_CS"/>
</dbReference>
<dbReference type="InterPro" id="IPR023591">
    <property type="entry name" value="Ribosomal_uS2_flav_dom_sf"/>
</dbReference>
<dbReference type="NCBIfam" id="TIGR01011">
    <property type="entry name" value="rpsB_bact"/>
    <property type="match status" value="1"/>
</dbReference>
<dbReference type="PANTHER" id="PTHR12534">
    <property type="entry name" value="30S RIBOSOMAL PROTEIN S2 PROKARYOTIC AND ORGANELLAR"/>
    <property type="match status" value="1"/>
</dbReference>
<dbReference type="PANTHER" id="PTHR12534:SF0">
    <property type="entry name" value="SMALL RIBOSOMAL SUBUNIT PROTEIN US2M"/>
    <property type="match status" value="1"/>
</dbReference>
<dbReference type="Pfam" id="PF00318">
    <property type="entry name" value="Ribosomal_S2"/>
    <property type="match status" value="1"/>
</dbReference>
<dbReference type="PRINTS" id="PR00395">
    <property type="entry name" value="RIBOSOMALS2"/>
</dbReference>
<dbReference type="SUPFAM" id="SSF52313">
    <property type="entry name" value="Ribosomal protein S2"/>
    <property type="match status" value="1"/>
</dbReference>
<dbReference type="PROSITE" id="PS00962">
    <property type="entry name" value="RIBOSOMAL_S2_1"/>
    <property type="match status" value="1"/>
</dbReference>
<dbReference type="PROSITE" id="PS00963">
    <property type="entry name" value="RIBOSOMAL_S2_2"/>
    <property type="match status" value="1"/>
</dbReference>
<accession>B2S3J6</accession>
<sequence>MAVVTIKNLLESGVHFGHQVRRWDPRMKKYIFAERNGIHIIDLQKTITAIREAYDMVRRTVSSGKSVLFVGTKKQSQQTIAKEAQRCGMFYVTNRWLGGMLTNFSTIRKSLSRLKKIERMEIDGTFEHLSKKEVASLRKEHAKLEKNLGGIKEMKELPGVVFIIDTRKETIAIREARRVGIPIVAVVDTNCNPEGIDYPIPGNDDAIRAISLFTQLIANAVMEAGNEHGLKIIENLQDEESGDELDESVSLHEEGREITDYENYTPPEEREYSVNDEGDVFDEDESLYEGR</sequence>
<gene>
    <name evidence="1" type="primary">rpsB</name>
    <name type="ordered locus">TPASS_0606</name>
</gene>
<reference key="1">
    <citation type="journal article" date="2008" name="BMC Microbiol.">
        <title>Complete genome sequence of Treponema pallidum ssp. pallidum strain SS14 determined with oligonucleotide arrays.</title>
        <authorList>
            <person name="Matejkova P."/>
            <person name="Strouhal M."/>
            <person name="Smajs D."/>
            <person name="Norris S.J."/>
            <person name="Palzkill T."/>
            <person name="Petrosino J.F."/>
            <person name="Sodergren E."/>
            <person name="Norton J.E."/>
            <person name="Singh J."/>
            <person name="Richmond T.A."/>
            <person name="Molla M.N."/>
            <person name="Albert T.J."/>
            <person name="Weinstock G.M."/>
        </authorList>
    </citation>
    <scope>NUCLEOTIDE SEQUENCE [LARGE SCALE GENOMIC DNA]</scope>
    <source>
        <strain>SS14</strain>
    </source>
</reference>